<feature type="initiator methionine" description="Removed" evidence="14 36 37">
    <location>
        <position position="1"/>
    </location>
</feature>
<feature type="chain" id="PRO_0000081814" description="RNA-binding protein 39">
    <location>
        <begin position="2"/>
        <end position="530"/>
    </location>
</feature>
<feature type="domain" description="RRM 1" evidence="2">
    <location>
        <begin position="153"/>
        <end position="230"/>
    </location>
</feature>
<feature type="domain" description="RRM 2" evidence="2">
    <location>
        <begin position="250"/>
        <end position="328"/>
    </location>
</feature>
<feature type="domain" description="RRM 3" evidence="2">
    <location>
        <begin position="445"/>
        <end position="508"/>
    </location>
</feature>
<feature type="region of interest" description="Disordered" evidence="3">
    <location>
        <begin position="1"/>
        <end position="146"/>
    </location>
</feature>
<feature type="region of interest" description="Interaction with JUN" evidence="1">
    <location>
        <begin position="291"/>
        <end position="406"/>
    </location>
</feature>
<feature type="region of interest" description="Activating domain" evidence="1">
    <location>
        <begin position="291"/>
        <end position="355"/>
    </location>
</feature>
<feature type="region of interest" description="Interaction with ESR1 and ESR2" evidence="1">
    <location>
        <begin position="355"/>
        <end position="406"/>
    </location>
</feature>
<feature type="region of interest" description="Interaction with NCOA6" evidence="1">
    <location>
        <begin position="406"/>
        <end position="530"/>
    </location>
</feature>
<feature type="compositionally biased region" description="Basic and acidic residues" evidence="3">
    <location>
        <begin position="14"/>
        <end position="32"/>
    </location>
</feature>
<feature type="compositionally biased region" description="Basic residues" evidence="3">
    <location>
        <begin position="33"/>
        <end position="56"/>
    </location>
</feature>
<feature type="compositionally biased region" description="Basic residues" evidence="3">
    <location>
        <begin position="64"/>
        <end position="95"/>
    </location>
</feature>
<feature type="compositionally biased region" description="Basic residues" evidence="3">
    <location>
        <begin position="119"/>
        <end position="130"/>
    </location>
</feature>
<feature type="compositionally biased region" description="Basic and acidic residues" evidence="3">
    <location>
        <begin position="131"/>
        <end position="146"/>
    </location>
</feature>
<feature type="modified residue" description="N-acetylalanine" evidence="14 36 37">
    <location>
        <position position="2"/>
    </location>
</feature>
<feature type="modified residue" description="Phosphotyrosine" evidence="31">
    <location>
        <position position="95"/>
    </location>
</feature>
<feature type="modified residue" description="Phosphoserine" evidence="31 34 35 38">
    <location>
        <position position="97"/>
    </location>
</feature>
<feature type="modified residue" description="Phosphoserine" evidence="31">
    <location>
        <position position="100"/>
    </location>
</feature>
<feature type="modified residue" description="Phosphoserine" evidence="38">
    <location>
        <position position="117"/>
    </location>
</feature>
<feature type="modified residue" description="Phosphoserine" evidence="38">
    <location>
        <position position="121"/>
    </location>
</feature>
<feature type="modified residue" description="Phosphoserine" evidence="30 31 32 34 35 38 39">
    <location>
        <position position="136"/>
    </location>
</feature>
<feature type="modified residue" description="Phosphothreonine" evidence="35">
    <location>
        <position position="146"/>
    </location>
</feature>
<feature type="modified residue" description="Phosphoserine" evidence="31">
    <location>
        <position position="334"/>
    </location>
</feature>
<feature type="modified residue" description="Phosphoserine" evidence="31 33 38">
    <location>
        <position position="337"/>
    </location>
</feature>
<feature type="modified residue" description="Phosphoserine" evidence="31 33 34 38">
    <location>
        <position position="341"/>
    </location>
</feature>
<feature type="cross-link" description="Glycyl lysine isopeptide (Lys-Gly) (interchain with G-Cter in SUMO2)" evidence="40">
    <location>
        <position position="111"/>
    </location>
</feature>
<feature type="cross-link" description="Glycyl lysine isopeptide (Lys-Gly) (interchain with G-Cter in SUMO2)" evidence="40">
    <location>
        <position position="119"/>
    </location>
</feature>
<feature type="cross-link" description="Glycyl lysine isopeptide (Lys-Gly) (interchain with G-Cter in SUMO2)" evidence="40">
    <location>
        <position position="244"/>
    </location>
</feature>
<feature type="splice variant" id="VSP_043375" description="In isoform 3." evidence="15 16">
    <location>
        <begin position="100"/>
        <end position="121"/>
    </location>
</feature>
<feature type="splice variant" id="VSP_005820" description="In isoform 2." evidence="20">
    <location>
        <begin position="392"/>
        <end position="397"/>
    </location>
</feature>
<feature type="sequence variant" id="VAR_015228" description="In dbSNP:rs1803701.">
    <original>A</original>
    <variation>V</variation>
    <location>
        <position position="2"/>
    </location>
</feature>
<feature type="sequence variant" id="VAR_083212" description="Associated with resistance to anticancer indisulam; decreased interaction with the DCX(DCAF15) complex in presence of indisulam; abolished degradation by the DCX(DCAF15) complex in presence of indisulam." evidence="7">
    <original>M</original>
    <variation>L</variation>
    <location>
        <position position="265"/>
    </location>
</feature>
<feature type="sequence variant" id="VAR_083213" description="Associated with resistance to anticancer indisulam." evidence="7">
    <original>G</original>
    <variation>E</variation>
    <location>
        <position position="268"/>
    </location>
</feature>
<feature type="sequence variant" id="VAR_083214" description="Associated with resistance to anticancer indisulam; abolished degradation by the DCX(DCAF15) complex in presence of indisulam." evidence="7">
    <original>G</original>
    <variation>R</variation>
    <location>
        <position position="268"/>
    </location>
</feature>
<feature type="sequence variant" id="VAR_083215" description="Associated with resistance to anticancer indisulam; decreased interaction with the DCX(DCAF15) complex in presence of indisulam; abolished degradation by the DCX(DCAF15) complex in presence of indisulam." evidence="7 8">
    <original>G</original>
    <variation>V</variation>
    <location>
        <position position="268"/>
    </location>
</feature>
<feature type="sequence variant" id="VAR_083216" description="Associated with resistance to anticancer indisulam; decreased interaction with the DCX(DCAF15) complex in presence of indisulam; abolished degradation by the DCX(DCAF15) complex in presence of indisulam." evidence="7">
    <original>G</original>
    <variation>W</variation>
    <location>
        <position position="268"/>
    </location>
</feature>
<feature type="sequence variant" id="VAR_083217" description="Associated with resistance to anticancer indisulam." evidence="7">
    <original>E</original>
    <variation>G</variation>
    <location>
        <position position="271"/>
    </location>
</feature>
<feature type="sequence variant" id="VAR_083218" description="Associated with resistance to anticancer indisulam; abolished degradation by the DCX(DCAF15) complex in presence of indisulam." evidence="7">
    <original>E</original>
    <variation>Q</variation>
    <location>
        <position position="271"/>
    </location>
</feature>
<feature type="sequence variant" id="VAR_083219" description="Associated with resistance to anticancer indisulam; abolished degradation by the DCX(DCAF15) complex in presence of indisulam." evidence="7">
    <original>P</original>
    <variation>S</variation>
    <location>
        <position position="272"/>
    </location>
</feature>
<feature type="helix" evidence="44">
    <location>
        <begin position="147"/>
        <end position="151"/>
    </location>
</feature>
<feature type="strand" evidence="44">
    <location>
        <begin position="154"/>
        <end position="160"/>
    </location>
</feature>
<feature type="helix" evidence="44">
    <location>
        <begin position="166"/>
        <end position="173"/>
    </location>
</feature>
<feature type="turn" evidence="44">
    <location>
        <begin position="174"/>
        <end position="176"/>
    </location>
</feature>
<feature type="strand" evidence="44">
    <location>
        <begin position="179"/>
        <end position="184"/>
    </location>
</feature>
<feature type="strand" evidence="42">
    <location>
        <begin position="189"/>
        <end position="192"/>
    </location>
</feature>
<feature type="strand" evidence="44">
    <location>
        <begin position="195"/>
        <end position="203"/>
    </location>
</feature>
<feature type="helix" evidence="44">
    <location>
        <begin position="206"/>
        <end position="211"/>
    </location>
</feature>
<feature type="turn" evidence="44">
    <location>
        <begin position="212"/>
        <end position="215"/>
    </location>
</feature>
<feature type="strand" evidence="44">
    <location>
        <begin position="224"/>
        <end position="227"/>
    </location>
</feature>
<feature type="strand" evidence="41">
    <location>
        <begin position="235"/>
        <end position="238"/>
    </location>
</feature>
<feature type="strand" evidence="46">
    <location>
        <begin position="250"/>
        <end position="256"/>
    </location>
</feature>
<feature type="helix" evidence="46">
    <location>
        <begin position="263"/>
        <end position="270"/>
    </location>
</feature>
<feature type="helix" evidence="46">
    <location>
        <begin position="271"/>
        <end position="273"/>
    </location>
</feature>
<feature type="strand" evidence="46">
    <location>
        <begin position="276"/>
        <end position="283"/>
    </location>
</feature>
<feature type="turn" evidence="46">
    <location>
        <begin position="285"/>
        <end position="287"/>
    </location>
</feature>
<feature type="strand" evidence="46">
    <location>
        <begin position="288"/>
        <end position="300"/>
    </location>
</feature>
<feature type="helix" evidence="46">
    <location>
        <begin position="301"/>
        <end position="311"/>
    </location>
</feature>
<feature type="strand" evidence="45">
    <location>
        <begin position="314"/>
        <end position="316"/>
    </location>
</feature>
<feature type="strand" evidence="46">
    <location>
        <begin position="322"/>
        <end position="325"/>
    </location>
</feature>
<feature type="helix" evidence="47">
    <location>
        <begin position="330"/>
        <end position="332"/>
    </location>
</feature>
<feature type="strand" evidence="43">
    <location>
        <begin position="424"/>
        <end position="431"/>
    </location>
</feature>
<feature type="turn" evidence="43">
    <location>
        <begin position="434"/>
        <end position="436"/>
    </location>
</feature>
<feature type="helix" evidence="43">
    <location>
        <begin position="442"/>
        <end position="454"/>
    </location>
</feature>
<feature type="turn" evidence="43">
    <location>
        <begin position="455"/>
        <end position="458"/>
    </location>
</feature>
<feature type="strand" evidence="43">
    <location>
        <begin position="461"/>
        <end position="465"/>
    </location>
</feature>
<feature type="strand" evidence="43">
    <location>
        <begin position="474"/>
        <end position="477"/>
    </location>
</feature>
<feature type="helix" evidence="43">
    <location>
        <begin position="481"/>
        <end position="491"/>
    </location>
</feature>
<feature type="strand" evidence="43">
    <location>
        <begin position="502"/>
        <end position="506"/>
    </location>
</feature>
<feature type="helix" evidence="43">
    <location>
        <begin position="508"/>
        <end position="514"/>
    </location>
</feature>
<feature type="helix" evidence="43">
    <location>
        <begin position="516"/>
        <end position="519"/>
    </location>
</feature>
<protein>
    <recommendedName>
        <fullName evidence="18">RNA-binding protein 39</fullName>
    </recommendedName>
    <alternativeName>
        <fullName evidence="17 19">CAPER alpha</fullName>
        <shortName evidence="17 19">CAPERalpha</shortName>
    </alternativeName>
    <alternativeName>
        <fullName evidence="20">Hepatocellular carcinoma protein 1</fullName>
    </alternativeName>
    <alternativeName>
        <fullName>RNA-binding motif protein 39</fullName>
    </alternativeName>
    <alternativeName>
        <fullName>RNA-binding region-containing protein 2</fullName>
    </alternativeName>
    <alternativeName>
        <fullName>Splicing factor HCC1</fullName>
    </alternativeName>
</protein>
<gene>
    <name evidence="18 22" type="primary">RBM39</name>
    <name evidence="20" type="synonym">HCC1</name>
    <name type="synonym">RNPC2</name>
</gene>
<reference key="1">
    <citation type="journal article" date="1993" name="J. Clin. Invest.">
        <title>Novel nuclear autoantigen with splicing factor motifs identified with antibody from hepatocellular carcinoma.</title>
        <authorList>
            <person name="Imai H."/>
            <person name="Chan E.K.L."/>
            <person name="Kiyosawa K."/>
            <person name="Fu X.-D."/>
            <person name="Tan E.M."/>
        </authorList>
    </citation>
    <scope>NUCLEOTIDE SEQUENCE [MRNA] (ISOFORMS 1 AND 2)</scope>
    <scope>FUNCTION</scope>
    <scope>SUBCELLULAR LOCATION</scope>
    <source>
        <tissue>Liver</tissue>
    </source>
</reference>
<reference key="2">
    <citation type="journal article" date="2004" name="Nat. Genet.">
        <title>Complete sequencing and characterization of 21,243 full-length human cDNAs.</title>
        <authorList>
            <person name="Ota T."/>
            <person name="Suzuki Y."/>
            <person name="Nishikawa T."/>
            <person name="Otsuki T."/>
            <person name="Sugiyama T."/>
            <person name="Irie R."/>
            <person name="Wakamatsu A."/>
            <person name="Hayashi K."/>
            <person name="Sato H."/>
            <person name="Nagai K."/>
            <person name="Kimura K."/>
            <person name="Makita H."/>
            <person name="Sekine M."/>
            <person name="Obayashi M."/>
            <person name="Nishi T."/>
            <person name="Shibahara T."/>
            <person name="Tanaka T."/>
            <person name="Ishii S."/>
            <person name="Yamamoto J."/>
            <person name="Saito K."/>
            <person name="Kawai Y."/>
            <person name="Isono Y."/>
            <person name="Nakamura Y."/>
            <person name="Nagahari K."/>
            <person name="Murakami K."/>
            <person name="Yasuda T."/>
            <person name="Iwayanagi T."/>
            <person name="Wagatsuma M."/>
            <person name="Shiratori A."/>
            <person name="Sudo H."/>
            <person name="Hosoiri T."/>
            <person name="Kaku Y."/>
            <person name="Kodaira H."/>
            <person name="Kondo H."/>
            <person name="Sugawara M."/>
            <person name="Takahashi M."/>
            <person name="Kanda K."/>
            <person name="Yokoi T."/>
            <person name="Furuya T."/>
            <person name="Kikkawa E."/>
            <person name="Omura Y."/>
            <person name="Abe K."/>
            <person name="Kamihara K."/>
            <person name="Katsuta N."/>
            <person name="Sato K."/>
            <person name="Tanikawa M."/>
            <person name="Yamazaki M."/>
            <person name="Ninomiya K."/>
            <person name="Ishibashi T."/>
            <person name="Yamashita H."/>
            <person name="Murakawa K."/>
            <person name="Fujimori K."/>
            <person name="Tanai H."/>
            <person name="Kimata M."/>
            <person name="Watanabe M."/>
            <person name="Hiraoka S."/>
            <person name="Chiba Y."/>
            <person name="Ishida S."/>
            <person name="Ono Y."/>
            <person name="Takiguchi S."/>
            <person name="Watanabe S."/>
            <person name="Yosida M."/>
            <person name="Hotuta T."/>
            <person name="Kusano J."/>
            <person name="Kanehori K."/>
            <person name="Takahashi-Fujii A."/>
            <person name="Hara H."/>
            <person name="Tanase T.-O."/>
            <person name="Nomura Y."/>
            <person name="Togiya S."/>
            <person name="Komai F."/>
            <person name="Hara R."/>
            <person name="Takeuchi K."/>
            <person name="Arita M."/>
            <person name="Imose N."/>
            <person name="Musashino K."/>
            <person name="Yuuki H."/>
            <person name="Oshima A."/>
            <person name="Sasaki N."/>
            <person name="Aotsuka S."/>
            <person name="Yoshikawa Y."/>
            <person name="Matsunawa H."/>
            <person name="Ichihara T."/>
            <person name="Shiohata N."/>
            <person name="Sano S."/>
            <person name="Moriya S."/>
            <person name="Momiyama H."/>
            <person name="Satoh N."/>
            <person name="Takami S."/>
            <person name="Terashima Y."/>
            <person name="Suzuki O."/>
            <person name="Nakagawa S."/>
            <person name="Senoh A."/>
            <person name="Mizoguchi H."/>
            <person name="Goto Y."/>
            <person name="Shimizu F."/>
            <person name="Wakebe H."/>
            <person name="Hishigaki H."/>
            <person name="Watanabe T."/>
            <person name="Sugiyama A."/>
            <person name="Takemoto M."/>
            <person name="Kawakami B."/>
            <person name="Yamazaki M."/>
            <person name="Watanabe K."/>
            <person name="Kumagai A."/>
            <person name="Itakura S."/>
            <person name="Fukuzumi Y."/>
            <person name="Fujimori Y."/>
            <person name="Komiyama M."/>
            <person name="Tashiro H."/>
            <person name="Tanigami A."/>
            <person name="Fujiwara T."/>
            <person name="Ono T."/>
            <person name="Yamada K."/>
            <person name="Fujii Y."/>
            <person name="Ozaki K."/>
            <person name="Hirao M."/>
            <person name="Ohmori Y."/>
            <person name="Kawabata A."/>
            <person name="Hikiji T."/>
            <person name="Kobatake N."/>
            <person name="Inagaki H."/>
            <person name="Ikema Y."/>
            <person name="Okamoto S."/>
            <person name="Okitani R."/>
            <person name="Kawakami T."/>
            <person name="Noguchi S."/>
            <person name="Itoh T."/>
            <person name="Shigeta K."/>
            <person name="Senba T."/>
            <person name="Matsumura K."/>
            <person name="Nakajima Y."/>
            <person name="Mizuno T."/>
            <person name="Morinaga M."/>
            <person name="Sasaki M."/>
            <person name="Togashi T."/>
            <person name="Oyama M."/>
            <person name="Hata H."/>
            <person name="Watanabe M."/>
            <person name="Komatsu T."/>
            <person name="Mizushima-Sugano J."/>
            <person name="Satoh T."/>
            <person name="Shirai Y."/>
            <person name="Takahashi Y."/>
            <person name="Nakagawa K."/>
            <person name="Okumura K."/>
            <person name="Nagase T."/>
            <person name="Nomura N."/>
            <person name="Kikuchi H."/>
            <person name="Masuho Y."/>
            <person name="Yamashita R."/>
            <person name="Nakai K."/>
            <person name="Yada T."/>
            <person name="Nakamura Y."/>
            <person name="Ohara O."/>
            <person name="Isogai T."/>
            <person name="Sugano S."/>
        </authorList>
    </citation>
    <scope>NUCLEOTIDE SEQUENCE [LARGE SCALE MRNA] (ISOFORM 3)</scope>
    <source>
        <tissue>Brain</tissue>
    </source>
</reference>
<reference key="3">
    <citation type="journal article" date="2001" name="Nature">
        <title>The DNA sequence and comparative analysis of human chromosome 20.</title>
        <authorList>
            <person name="Deloukas P."/>
            <person name="Matthews L.H."/>
            <person name="Ashurst J.L."/>
            <person name="Burton J."/>
            <person name="Gilbert J.G.R."/>
            <person name="Jones M."/>
            <person name="Stavrides G."/>
            <person name="Almeida J.P."/>
            <person name="Babbage A.K."/>
            <person name="Bagguley C.L."/>
            <person name="Bailey J."/>
            <person name="Barlow K.F."/>
            <person name="Bates K.N."/>
            <person name="Beard L.M."/>
            <person name="Beare D.M."/>
            <person name="Beasley O.P."/>
            <person name="Bird C.P."/>
            <person name="Blakey S.E."/>
            <person name="Bridgeman A.M."/>
            <person name="Brown A.J."/>
            <person name="Buck D."/>
            <person name="Burrill W.D."/>
            <person name="Butler A.P."/>
            <person name="Carder C."/>
            <person name="Carter N.P."/>
            <person name="Chapman J.C."/>
            <person name="Clamp M."/>
            <person name="Clark G."/>
            <person name="Clark L.N."/>
            <person name="Clark S.Y."/>
            <person name="Clee C.M."/>
            <person name="Clegg S."/>
            <person name="Cobley V.E."/>
            <person name="Collier R.E."/>
            <person name="Connor R.E."/>
            <person name="Corby N.R."/>
            <person name="Coulson A."/>
            <person name="Coville G.J."/>
            <person name="Deadman R."/>
            <person name="Dhami P.D."/>
            <person name="Dunn M."/>
            <person name="Ellington A.G."/>
            <person name="Frankland J.A."/>
            <person name="Fraser A."/>
            <person name="French L."/>
            <person name="Garner P."/>
            <person name="Grafham D.V."/>
            <person name="Griffiths C."/>
            <person name="Griffiths M.N.D."/>
            <person name="Gwilliam R."/>
            <person name="Hall R.E."/>
            <person name="Hammond S."/>
            <person name="Harley J.L."/>
            <person name="Heath P.D."/>
            <person name="Ho S."/>
            <person name="Holden J.L."/>
            <person name="Howden P.J."/>
            <person name="Huckle E."/>
            <person name="Hunt A.R."/>
            <person name="Hunt S.E."/>
            <person name="Jekosch K."/>
            <person name="Johnson C.M."/>
            <person name="Johnson D."/>
            <person name="Kay M.P."/>
            <person name="Kimberley A.M."/>
            <person name="King A."/>
            <person name="Knights A."/>
            <person name="Laird G.K."/>
            <person name="Lawlor S."/>
            <person name="Lehvaeslaiho M.H."/>
            <person name="Leversha M.A."/>
            <person name="Lloyd C."/>
            <person name="Lloyd D.M."/>
            <person name="Lovell J.D."/>
            <person name="Marsh V.L."/>
            <person name="Martin S.L."/>
            <person name="McConnachie L.J."/>
            <person name="McLay K."/>
            <person name="McMurray A.A."/>
            <person name="Milne S.A."/>
            <person name="Mistry D."/>
            <person name="Moore M.J.F."/>
            <person name="Mullikin J.C."/>
            <person name="Nickerson T."/>
            <person name="Oliver K."/>
            <person name="Parker A."/>
            <person name="Patel R."/>
            <person name="Pearce T.A.V."/>
            <person name="Peck A.I."/>
            <person name="Phillimore B.J.C.T."/>
            <person name="Prathalingam S.R."/>
            <person name="Plumb R.W."/>
            <person name="Ramsay H."/>
            <person name="Rice C.M."/>
            <person name="Ross M.T."/>
            <person name="Scott C.E."/>
            <person name="Sehra H.K."/>
            <person name="Shownkeen R."/>
            <person name="Sims S."/>
            <person name="Skuce C.D."/>
            <person name="Smith M.L."/>
            <person name="Soderlund C."/>
            <person name="Steward C.A."/>
            <person name="Sulston J.E."/>
            <person name="Swann R.M."/>
            <person name="Sycamore N."/>
            <person name="Taylor R."/>
            <person name="Tee L."/>
            <person name="Thomas D.W."/>
            <person name="Thorpe A."/>
            <person name="Tracey A."/>
            <person name="Tromans A.C."/>
            <person name="Vaudin M."/>
            <person name="Wall M."/>
            <person name="Wallis J.M."/>
            <person name="Whitehead S.L."/>
            <person name="Whittaker P."/>
            <person name="Willey D.L."/>
            <person name="Williams L."/>
            <person name="Williams S.A."/>
            <person name="Wilming L."/>
            <person name="Wray P.W."/>
            <person name="Hubbard T."/>
            <person name="Durbin R.M."/>
            <person name="Bentley D.R."/>
            <person name="Beck S."/>
            <person name="Rogers J."/>
        </authorList>
    </citation>
    <scope>NUCLEOTIDE SEQUENCE [LARGE SCALE GENOMIC DNA]</scope>
</reference>
<reference key="4">
    <citation type="submission" date="2005-09" db="EMBL/GenBank/DDBJ databases">
        <authorList>
            <person name="Mural R.J."/>
            <person name="Istrail S."/>
            <person name="Sutton G.G."/>
            <person name="Florea L."/>
            <person name="Halpern A.L."/>
            <person name="Mobarry C.M."/>
            <person name="Lippert R."/>
            <person name="Walenz B."/>
            <person name="Shatkay H."/>
            <person name="Dew I."/>
            <person name="Miller J.R."/>
            <person name="Flanigan M.J."/>
            <person name="Edwards N.J."/>
            <person name="Bolanos R."/>
            <person name="Fasulo D."/>
            <person name="Halldorsson B.V."/>
            <person name="Hannenhalli S."/>
            <person name="Turner R."/>
            <person name="Yooseph S."/>
            <person name="Lu F."/>
            <person name="Nusskern D.R."/>
            <person name="Shue B.C."/>
            <person name="Zheng X.H."/>
            <person name="Zhong F."/>
            <person name="Delcher A.L."/>
            <person name="Huson D.H."/>
            <person name="Kravitz S.A."/>
            <person name="Mouchard L."/>
            <person name="Reinert K."/>
            <person name="Remington K.A."/>
            <person name="Clark A.G."/>
            <person name="Waterman M.S."/>
            <person name="Eichler E.E."/>
            <person name="Adams M.D."/>
            <person name="Hunkapiller M.W."/>
            <person name="Myers E.W."/>
            <person name="Venter J.C."/>
        </authorList>
    </citation>
    <scope>NUCLEOTIDE SEQUENCE [LARGE SCALE GENOMIC DNA]</scope>
</reference>
<reference key="5">
    <citation type="journal article" date="2004" name="Genome Res.">
        <title>The status, quality, and expansion of the NIH full-length cDNA project: the Mammalian Gene Collection (MGC).</title>
        <authorList>
            <consortium name="The MGC Project Team"/>
        </authorList>
    </citation>
    <scope>NUCLEOTIDE SEQUENCE [LARGE SCALE MRNA] (ISOFORMS 1 AND 3)</scope>
</reference>
<reference key="6">
    <citation type="submission" date="2009-03" db="UniProtKB">
        <authorList>
            <person name="Bienvenut W.V."/>
            <person name="Waridel P."/>
            <person name="Quadroni M."/>
        </authorList>
    </citation>
    <scope>PROTEIN SEQUENCE OF 2-17; 154-163; 168-178; 218-232; 268-289; 292-305; 307-319; 330-356 AND 478-494</scope>
    <scope>CLEAVAGE OF INITIATOR METHIONINE</scope>
    <scope>ACETYLATION AT ALA-2</scope>
    <scope>IDENTIFICATION BY MASS SPECTROMETRY</scope>
    <source>
        <tissue>Cervix carcinoma</tissue>
    </source>
</reference>
<reference key="7">
    <citation type="journal article" date="2005" name="Mol. Cell">
        <title>Steroid hormone receptor coactivation and alternative RNA splicing by U2AF65-related proteins CAPERalpha and CAPERbeta.</title>
        <authorList>
            <person name="Dowhan D.H."/>
            <person name="Hong E.P."/>
            <person name="Auboeuf D."/>
            <person name="Dennis A.P."/>
            <person name="Wilson M.M."/>
            <person name="Berget S.M."/>
            <person name="O'Malley B.W."/>
        </authorList>
    </citation>
    <scope>FUNCTION</scope>
</reference>
<reference key="8">
    <citation type="journal article" date="2005" name="Mol. Cell. Biol.">
        <title>A novel SR-related protein is required for the second step of pre-mRNA splicing.</title>
        <authorList>
            <person name="Cazalla D."/>
            <person name="Newton K."/>
            <person name="Caceres J.F."/>
        </authorList>
    </citation>
    <scope>INTERACTION WITH RSRC1</scope>
</reference>
<reference key="9">
    <citation type="journal article" date="2006" name="Cell">
        <title>Global, in vivo, and site-specific phosphorylation dynamics in signaling networks.</title>
        <authorList>
            <person name="Olsen J.V."/>
            <person name="Blagoev B."/>
            <person name="Gnad F."/>
            <person name="Macek B."/>
            <person name="Kumar C."/>
            <person name="Mortensen P."/>
            <person name="Mann M."/>
        </authorList>
    </citation>
    <scope>PHOSPHORYLATION [LARGE SCALE ANALYSIS] AT SER-136</scope>
    <scope>IDENTIFICATION BY MASS SPECTROMETRY [LARGE SCALE ANALYSIS]</scope>
    <source>
        <tissue>Cervix carcinoma</tissue>
    </source>
</reference>
<reference key="10">
    <citation type="journal article" date="2008" name="Mol. Cell">
        <title>Kinase-selective enrichment enables quantitative phosphoproteomics of the kinome across the cell cycle.</title>
        <authorList>
            <person name="Daub H."/>
            <person name="Olsen J.V."/>
            <person name="Bairlein M."/>
            <person name="Gnad F."/>
            <person name="Oppermann F.S."/>
            <person name="Korner R."/>
            <person name="Greff Z."/>
            <person name="Keri G."/>
            <person name="Stemmann O."/>
            <person name="Mann M."/>
        </authorList>
    </citation>
    <scope>PHOSPHORYLATION [LARGE SCALE ANALYSIS] AT SER-136</scope>
    <scope>IDENTIFICATION BY MASS SPECTROMETRY [LARGE SCALE ANALYSIS]</scope>
    <source>
        <tissue>Cervix carcinoma</tissue>
    </source>
</reference>
<reference key="11">
    <citation type="journal article" date="2008" name="Proc. Natl. Acad. Sci. U.S.A.">
        <title>A quantitative atlas of mitotic phosphorylation.</title>
        <authorList>
            <person name="Dephoure N."/>
            <person name="Zhou C."/>
            <person name="Villen J."/>
            <person name="Beausoleil S.A."/>
            <person name="Bakalarski C.E."/>
            <person name="Elledge S.J."/>
            <person name="Gygi S.P."/>
        </authorList>
    </citation>
    <scope>PHOSPHORYLATION [LARGE SCALE ANALYSIS] AT TYR-95; SER-97; SER-100; SER-136; SER-334; SER-337 AND SER-341</scope>
    <scope>IDENTIFICATION BY MASS SPECTROMETRY [LARGE SCALE ANALYSIS]</scope>
    <source>
        <tissue>Cervix carcinoma</tissue>
    </source>
</reference>
<reference key="12">
    <citation type="journal article" date="2009" name="Sci. Signal.">
        <title>Quantitative phosphoproteomic analysis of T cell receptor signaling reveals system-wide modulation of protein-protein interactions.</title>
        <authorList>
            <person name="Mayya V."/>
            <person name="Lundgren D.H."/>
            <person name="Hwang S.-I."/>
            <person name="Rezaul K."/>
            <person name="Wu L."/>
            <person name="Eng J.K."/>
            <person name="Rodionov V."/>
            <person name="Han D.K."/>
        </authorList>
    </citation>
    <scope>PHOSPHORYLATION [LARGE SCALE ANALYSIS] AT SER-337 AND SER-341</scope>
    <scope>IDENTIFICATION BY MASS SPECTROMETRY [LARGE SCALE ANALYSIS]</scope>
    <source>
        <tissue>Leukemic T-cell</tissue>
    </source>
</reference>
<reference key="13">
    <citation type="journal article" date="2010" name="Sci. Signal.">
        <title>Quantitative phosphoproteomics reveals widespread full phosphorylation site occupancy during mitosis.</title>
        <authorList>
            <person name="Olsen J.V."/>
            <person name="Vermeulen M."/>
            <person name="Santamaria A."/>
            <person name="Kumar C."/>
            <person name="Miller M.L."/>
            <person name="Jensen L.J."/>
            <person name="Gnad F."/>
            <person name="Cox J."/>
            <person name="Jensen T.S."/>
            <person name="Nigg E.A."/>
            <person name="Brunak S."/>
            <person name="Mann M."/>
        </authorList>
    </citation>
    <scope>PHOSPHORYLATION [LARGE SCALE ANALYSIS] AT SER-97; SER-136 AND SER-341</scope>
    <scope>IDENTIFICATION BY MASS SPECTROMETRY [LARGE SCALE ANALYSIS]</scope>
    <source>
        <tissue>Cervix carcinoma</tissue>
    </source>
</reference>
<reference key="14">
    <citation type="journal article" date="2011" name="BMC Syst. Biol.">
        <title>Initial characterization of the human central proteome.</title>
        <authorList>
            <person name="Burkard T.R."/>
            <person name="Planyavsky M."/>
            <person name="Kaupe I."/>
            <person name="Breitwieser F.P."/>
            <person name="Buerckstuemmer T."/>
            <person name="Bennett K.L."/>
            <person name="Superti-Furga G."/>
            <person name="Colinge J."/>
        </authorList>
    </citation>
    <scope>IDENTIFICATION BY MASS SPECTROMETRY [LARGE SCALE ANALYSIS]</scope>
</reference>
<reference key="15">
    <citation type="journal article" date="2011" name="Sci. Signal.">
        <title>System-wide temporal characterization of the proteome and phosphoproteome of human embryonic stem cell differentiation.</title>
        <authorList>
            <person name="Rigbolt K.T."/>
            <person name="Prokhorova T.A."/>
            <person name="Akimov V."/>
            <person name="Henningsen J."/>
            <person name="Johansen P.T."/>
            <person name="Kratchmarova I."/>
            <person name="Kassem M."/>
            <person name="Mann M."/>
            <person name="Olsen J.V."/>
            <person name="Blagoev B."/>
        </authorList>
    </citation>
    <scope>PHOSPHORYLATION [LARGE SCALE ANALYSIS] AT SER-97; SER-136 AND THR-146</scope>
    <scope>IDENTIFICATION BY MASS SPECTROMETRY [LARGE SCALE ANALYSIS]</scope>
</reference>
<reference key="16">
    <citation type="journal article" date="2012" name="Mol. Cell. Proteomics">
        <title>Comparative large-scale characterisation of plant vs. mammal proteins reveals similar and idiosyncratic N-alpha acetylation features.</title>
        <authorList>
            <person name="Bienvenut W.V."/>
            <person name="Sumpton D."/>
            <person name="Martinez A."/>
            <person name="Lilla S."/>
            <person name="Espagne C."/>
            <person name="Meinnel T."/>
            <person name="Giglione C."/>
        </authorList>
    </citation>
    <scope>ACETYLATION [LARGE SCALE ANALYSIS] AT ALA-2</scope>
    <scope>CLEAVAGE OF INITIATOR METHIONINE [LARGE SCALE ANALYSIS]</scope>
    <scope>IDENTIFICATION BY MASS SPECTROMETRY [LARGE SCALE ANALYSIS]</scope>
</reference>
<reference key="17">
    <citation type="journal article" date="2012" name="Proc. Natl. Acad. Sci. U.S.A.">
        <title>N-terminal acetylome analyses and functional insights of the N-terminal acetyltransferase NatB.</title>
        <authorList>
            <person name="Van Damme P."/>
            <person name="Lasa M."/>
            <person name="Polevoda B."/>
            <person name="Gazquez C."/>
            <person name="Elosegui-Artola A."/>
            <person name="Kim D.S."/>
            <person name="De Juan-Pardo E."/>
            <person name="Demeyer K."/>
            <person name="Hole K."/>
            <person name="Larrea E."/>
            <person name="Timmerman E."/>
            <person name="Prieto J."/>
            <person name="Arnesen T."/>
            <person name="Sherman F."/>
            <person name="Gevaert K."/>
            <person name="Aldabe R."/>
        </authorList>
    </citation>
    <scope>ACETYLATION [LARGE SCALE ANALYSIS] AT ALA-2</scope>
    <scope>CLEAVAGE OF INITIATOR METHIONINE [LARGE SCALE ANALYSIS]</scope>
    <scope>IDENTIFICATION BY MASS SPECTROMETRY [LARGE SCALE ANALYSIS]</scope>
</reference>
<reference key="18">
    <citation type="journal article" date="2013" name="J. Proteome Res.">
        <title>Toward a comprehensive characterization of a human cancer cell phosphoproteome.</title>
        <authorList>
            <person name="Zhou H."/>
            <person name="Di Palma S."/>
            <person name="Preisinger C."/>
            <person name="Peng M."/>
            <person name="Polat A.N."/>
            <person name="Heck A.J."/>
            <person name="Mohammed S."/>
        </authorList>
    </citation>
    <scope>PHOSPHORYLATION [LARGE SCALE ANALYSIS] AT SER-97; SER-117; SER-121; SER-136; SER-337 AND SER-341</scope>
    <scope>IDENTIFICATION BY MASS SPECTROMETRY [LARGE SCALE ANALYSIS]</scope>
    <source>
        <tissue>Cervix carcinoma</tissue>
        <tissue>Erythroleukemia</tissue>
    </source>
</reference>
<reference key="19">
    <citation type="journal article" date="2014" name="J. Proteomics">
        <title>An enzyme assisted RP-RPLC approach for in-depth analysis of human liver phosphoproteome.</title>
        <authorList>
            <person name="Bian Y."/>
            <person name="Song C."/>
            <person name="Cheng K."/>
            <person name="Dong M."/>
            <person name="Wang F."/>
            <person name="Huang J."/>
            <person name="Sun D."/>
            <person name="Wang L."/>
            <person name="Ye M."/>
            <person name="Zou H."/>
        </authorList>
    </citation>
    <scope>PHOSPHORYLATION [LARGE SCALE ANALYSIS] AT SER-136</scope>
    <scope>IDENTIFICATION BY MASS SPECTROMETRY [LARGE SCALE ANALYSIS]</scope>
    <source>
        <tissue>Liver</tissue>
    </source>
</reference>
<reference key="20">
    <citation type="journal article" date="2017" name="Nat. Struct. Mol. Biol.">
        <title>Site-specific mapping of the human SUMO proteome reveals co-modification with phosphorylation.</title>
        <authorList>
            <person name="Hendriks I.A."/>
            <person name="Lyon D."/>
            <person name="Young C."/>
            <person name="Jensen L.J."/>
            <person name="Vertegaal A.C."/>
            <person name="Nielsen M.L."/>
        </authorList>
    </citation>
    <scope>SUMOYLATION [LARGE SCALE ANALYSIS] AT LYS-111; LYS-119 AND LYS-244</scope>
    <scope>IDENTIFICATION BY MASS SPECTROMETRY [LARGE SCALE ANALYSIS]</scope>
</reference>
<reference key="21">
    <citation type="journal article" date="2017" name="Nat. Chem. Biol.">
        <title>Selective degradation of splicing factor CAPERalpha by anticancer sulfonamides.</title>
        <authorList>
            <person name="Uehara T."/>
            <person name="Minoshima Y."/>
            <person name="Sagane K."/>
            <person name="Sugi N.H."/>
            <person name="Mitsuhashi K.O."/>
            <person name="Yamamoto N."/>
            <person name="Kamiyama H."/>
            <person name="Takahashi K."/>
            <person name="Kotake Y."/>
            <person name="Uesugi M."/>
            <person name="Yokoi A."/>
            <person name="Inoue A."/>
            <person name="Yoshida T."/>
            <person name="Mabuchi M."/>
            <person name="Tanaka A."/>
            <person name="Owa T."/>
        </authorList>
    </citation>
    <scope>FUNCTION</scope>
    <scope>UBIQUITINATION</scope>
    <scope>VARIANT VAL-268</scope>
    <scope>CHARACTERIZATION OF VARIANT VAL-268</scope>
</reference>
<reference key="22">
    <citation type="journal article" date="2017" name="Science">
        <title>Anticancer sulfonamides target splicing by inducing RBM39 degradation via recruitment to DCAF15.</title>
        <authorList>
            <person name="Han T."/>
            <person name="Goralski M."/>
            <person name="Gaskill N."/>
            <person name="Capota E."/>
            <person name="Kim J."/>
            <person name="Ting T.C."/>
            <person name="Xie Y."/>
            <person name="Williams N.S."/>
            <person name="Nijhawan D."/>
        </authorList>
    </citation>
    <scope>FUNCTION</scope>
    <scope>UBIQUITINATION</scope>
    <scope>VARIANTS LEU-265; ARG-268; GLU-268; TRP-268; VAL-268; GLN-271; GLY-271 AND SER-272</scope>
    <scope>CHARACTERIZATION OF VARIANTS LEU-265; ARG-268; TRP-268; VAL-268; GLN-271 AND SER-272</scope>
</reference>
<reference key="23">
    <citation type="journal article" date="2017" name="Science">
        <authorList>
            <person name="Han T."/>
            <person name="Goralski M."/>
            <person name="Gaskill N."/>
            <person name="Capota E."/>
            <person name="Kim J."/>
            <person name="Ting T.C."/>
            <person name="Xie Y."/>
            <person name="Williams N.S."/>
            <person name="Nijhawan D."/>
        </authorList>
    </citation>
    <scope>ERRATUM OF PUBMED:28302793</scope>
</reference>
<reference key="24">
    <citation type="journal article" date="2019" name="Cell Rep.">
        <title>Aryl sulfonamides degrade RBM39 and RBM23 by recruitment to CRL4-DCAF15.</title>
        <authorList>
            <person name="Ting T.C."/>
            <person name="Goralski M."/>
            <person name="Klein K."/>
            <person name="Wang B."/>
            <person name="Kim J."/>
            <person name="Xie Y."/>
            <person name="Nijhawan D."/>
        </authorList>
    </citation>
    <scope>UBIQUITINATION</scope>
</reference>
<reference key="25">
    <citation type="journal article" date="2019" name="EMBO Rep.">
        <title>U2AF65 assemblies drive sequence-specific splice site recognition.</title>
        <authorList>
            <person name="Tari M."/>
            <person name="Manceau V."/>
            <person name="de Matha Salone J."/>
            <person name="Kobayashi A."/>
            <person name="Pastre D."/>
            <person name="Maucuer A."/>
        </authorList>
    </citation>
    <scope>FUNCTION</scope>
</reference>
<reference key="26">
    <citation type="submission" date="2007-09" db="PDB data bank">
        <title>Solution NMR structure of CAPER RRM2 domain.</title>
        <authorList>
            <consortium name="Northeast structural genomics consortium (NESG)"/>
        </authorList>
    </citation>
    <scope>STRUCTURE BY NMR OF 235-331</scope>
</reference>
<reference key="27">
    <citation type="submission" date="2013-12" db="PDB data bank">
        <title>NMR structure of the first RRM domain of the protein RBM39 from Homo sapiens.</title>
        <authorList>
            <person name="Serrano P."/>
            <person name="Wuthrich K."/>
            <person name="Geralt M."/>
            <person name="Dutta S.K."/>
        </authorList>
    </citation>
    <scope>STRUCTURE BY NMR OF 144-234</scope>
</reference>
<reference key="28">
    <citation type="journal article" date="2014" name="J. Biol. Chem.">
        <title>Cancer-relevant splicing factor CAPERalpha engages the essential splicing factor SF3b155 in a specific ternary complex.</title>
        <authorList>
            <person name="Loerch S."/>
            <person name="Maucuer A."/>
            <person name="Manceau V."/>
            <person name="Green M.R."/>
            <person name="Kielkopf C.L."/>
        </authorList>
    </citation>
    <scope>X-RAY CRYSTALLOGRAPHY (1.74 ANGSTROMS) OF 417-530 IN COMPLEX WITH SF3B1</scope>
    <scope>FUNCTION</scope>
</reference>
<reference evidence="24 25 26" key="29">
    <citation type="journal article" date="2020" name="Nat. Chem. Biol.">
        <title>Structural complementarity facilitates E7820-mediated degradation of RBM39 by DCAF15.</title>
        <authorList>
            <person name="Faust T.B."/>
            <person name="Yoon H."/>
            <person name="Nowak R.P."/>
            <person name="Donovan K.A."/>
            <person name="Li Z."/>
            <person name="Cai Q."/>
            <person name="Eleuteri N.A."/>
            <person name="Zhang T."/>
            <person name="Gray N.S."/>
            <person name="Fischer E.S."/>
        </authorList>
    </citation>
    <scope>X-RAY CRYSTALLOGRAPHY (2.9 ANGSTROMS) OF 250-332 IN COMPLEX WITH DCAF15</scope>
    <scope>UBIQUITINATION</scope>
</reference>
<reference evidence="27 28 29" key="30">
    <citation type="journal article" date="2020" name="Nat. Chem. Biol.">
        <title>Structural basis of indisulam-mediated RBM39 recruitment to DCAF15 E3 ligase complex.</title>
        <authorList>
            <person name="Bussiere D.E."/>
            <person name="Xie L."/>
            <person name="Srinivas H."/>
            <person name="Shu W."/>
            <person name="Burke A."/>
            <person name="Be C."/>
            <person name="Zhao J."/>
            <person name="Godbole A."/>
            <person name="King D."/>
            <person name="Karki R.G."/>
            <person name="Hornak V."/>
            <person name="Xu F."/>
            <person name="Cobb J."/>
            <person name="Carte N."/>
            <person name="Frank A.O."/>
            <person name="Frommlet A."/>
            <person name="Graff P."/>
            <person name="Knapp M."/>
            <person name="Fazal A."/>
            <person name="Okram B."/>
            <person name="Jiang S."/>
            <person name="Michellys P.Y."/>
            <person name="Beckwith R."/>
            <person name="Voshol H."/>
            <person name="Wiesmann C."/>
            <person name="Solomon J.M."/>
            <person name="Paulk J."/>
        </authorList>
    </citation>
    <scope>X-RAY CRYSTALLOGRAPHY (2.30 ANGSTROMS) OF 91-171 IN COMPLEX WITH DCAF15</scope>
    <scope>STRUCTURE BY ELECTRON MICROSCOPY (3.54 ANGSTROMS) IN COMPLEX WITH DCAF15</scope>
    <scope>IDENTIFICATION IN THE DCX(DCAF15) COMPLEX</scope>
    <scope>VARIANTS LEU-265; TRP-268 AND VAL-268</scope>
    <scope>CHARACTERIZATION OF VARIANTS LEU-265; TRP-268 AND VAL-268</scope>
</reference>
<reference evidence="23" key="31">
    <citation type="journal article" date="2019" name="Structure">
        <title>Structural basis and kinetic pathway of RBM39 recruitment to DCAF15 by a sulfonamide molecular glue E7820.</title>
        <authorList>
            <person name="Du X."/>
            <person name="Volkov O.A."/>
            <person name="Czerwinski R.M."/>
            <person name="Tan H."/>
            <person name="Huerta C."/>
            <person name="Morton E.R."/>
            <person name="Rizzi J.P."/>
            <person name="Wehn P.M."/>
            <person name="Xu R."/>
            <person name="Nijhawan D."/>
            <person name="Wallace E.M."/>
        </authorList>
    </citation>
    <scope>X-RAY CRYSTALLOGRAPHY (2.90 ANGSTROMS) OF 235-331 IN COMPLEX WITH DCAF15</scope>
</reference>
<keyword id="KW-0002">3D-structure</keyword>
<keyword id="KW-0007">Acetylation</keyword>
<keyword id="KW-0010">Activator</keyword>
<keyword id="KW-0025">Alternative splicing</keyword>
<keyword id="KW-0903">Direct protein sequencing</keyword>
<keyword id="KW-1017">Isopeptide bond</keyword>
<keyword id="KW-0507">mRNA processing</keyword>
<keyword id="KW-0508">mRNA splicing</keyword>
<keyword id="KW-0539">Nucleus</keyword>
<keyword id="KW-0597">Phosphoprotein</keyword>
<keyword id="KW-1267">Proteomics identification</keyword>
<keyword id="KW-1185">Reference proteome</keyword>
<keyword id="KW-0677">Repeat</keyword>
<keyword id="KW-0694">RNA-binding</keyword>
<keyword id="KW-0804">Transcription</keyword>
<keyword id="KW-0805">Transcription regulation</keyword>
<keyword id="KW-0832">Ubl conjugation</keyword>
<comment type="function">
    <text evidence="1 4 6 7 8 9">RNA-binding protein that acts as a pre-mRNA splicing factor (PubMed:15694343, PubMed:24795046, PubMed:28302793, PubMed:28437394, PubMed:31271494). Acts by promoting exon inclusion via regulation of exon cassette splicing (PubMed:31271494). Also acts as a transcriptional coactivator for steroid nuclear receptors ESR1/ER-alpha and ESR2/ER-beta, and JUN/AP-1, independently of the pre-mRNA splicing factor activity (By similarity).</text>
</comment>
<comment type="subunit">
    <text evidence="1 5 6">Interacts with NCOA6 and JUN. Interacts with ESR1 and ESR2, in the presence of estradiol (E2) (By similarity). Interacts with RSRC1 (via Arg/Ser-rich domain) (PubMed:15798186). Interacts with SF3B1 (PubMed:24795046). Interacts with ZNF106 (via N-terminus) (By similarity).</text>
</comment>
<comment type="interaction">
    <interactant intactId="EBI-395290">
        <id>Q14498</id>
    </interactant>
    <interactant intactId="EBI-8466265">
        <id>Q96MA6</id>
        <label>AK8</label>
    </interactant>
    <organismsDiffer>false</organismsDiffer>
    <experiments>3</experiments>
</comment>
<comment type="interaction">
    <interactant intactId="EBI-395290">
        <id>Q14498</id>
    </interactant>
    <interactant intactId="EBI-10248982">
        <id>Q66PJ3-3</id>
        <label>ARL6IP4</label>
    </interactant>
    <organismsDiffer>false</organismsDiffer>
    <experiments>3</experiments>
</comment>
<comment type="interaction">
    <interactant intactId="EBI-395290">
        <id>Q14498</id>
    </interactant>
    <interactant intactId="EBI-750020">
        <id>P49760</id>
        <label>CLK2</label>
    </interactant>
    <organismsDiffer>false</organismsDiffer>
    <experiments>9</experiments>
</comment>
<comment type="interaction">
    <interactant intactId="EBI-395290">
        <id>Q14498</id>
    </interactant>
    <interactant intactId="EBI-347804">
        <id>P68400</id>
        <label>CSNK2A1</label>
    </interactant>
    <organismsDiffer>false</organismsDiffer>
    <experiments>3</experiments>
</comment>
<comment type="interaction">
    <interactant intactId="EBI-395290">
        <id>Q14498</id>
    </interactant>
    <interactant intactId="EBI-348169">
        <id>P67870</id>
        <label>CSNK2B</label>
    </interactant>
    <organismsDiffer>false</organismsDiffer>
    <experiments>4</experiments>
</comment>
<comment type="interaction">
    <interactant intactId="EBI-395290">
        <id>Q14498</id>
    </interactant>
    <interactant intactId="EBI-739789">
        <id>Q92997</id>
        <label>DVL3</label>
    </interactant>
    <organismsDiffer>false</organismsDiffer>
    <experiments>3</experiments>
</comment>
<comment type="interaction">
    <interactant intactId="EBI-395290">
        <id>Q14498</id>
    </interactant>
    <interactant intactId="EBI-715611">
        <id>Q9C086</id>
        <label>INO80B</label>
    </interactant>
    <organismsDiffer>false</organismsDiffer>
    <experiments>3</experiments>
</comment>
<comment type="interaction">
    <interactant intactId="EBI-395290">
        <id>Q14498</id>
    </interactant>
    <interactant intactId="EBI-751942">
        <id>Q7Z7F0</id>
        <label>KHDC4</label>
    </interactant>
    <organismsDiffer>false</organismsDiffer>
    <experiments>3</experiments>
</comment>
<comment type="interaction">
    <interactant intactId="EBI-395290">
        <id>Q14498</id>
    </interactant>
    <interactant intactId="EBI-10176379">
        <id>P59991</id>
        <label>KRTAP12-2</label>
    </interactant>
    <organismsDiffer>false</organismsDiffer>
    <experiments>3</experiments>
</comment>
<comment type="interaction">
    <interactant intactId="EBI-395290">
        <id>Q14498</id>
    </interactant>
    <interactant intactId="EBI-21591415">
        <id>P13473-2</id>
        <label>LAMP2</label>
    </interactant>
    <organismsDiffer>false</organismsDiffer>
    <experiments>3</experiments>
</comment>
<comment type="interaction">
    <interactant intactId="EBI-395290">
        <id>Q14498</id>
    </interactant>
    <interactant intactId="EBI-3920396">
        <id>Q6ZUT1</id>
        <label>NKAPD1</label>
    </interactant>
    <organismsDiffer>false</organismsDiffer>
    <experiments>6</experiments>
</comment>
<comment type="interaction">
    <interactant intactId="EBI-395290">
        <id>Q14498</id>
    </interactant>
    <interactant intactId="EBI-10180231">
        <id>Q6ZUT1-2</id>
        <label>NKAPD1</label>
    </interactant>
    <organismsDiffer>false</organismsDiffer>
    <experiments>3</experiments>
</comment>
<comment type="interaction">
    <interactant intactId="EBI-395290">
        <id>Q14498</id>
    </interactant>
    <interactant intactId="EBI-946095">
        <id>Q15365</id>
        <label>PCBP1</label>
    </interactant>
    <organismsDiffer>false</organismsDiffer>
    <experiments>3</experiments>
</comment>
<comment type="interaction">
    <interactant intactId="EBI-395290">
        <id>Q14498</id>
    </interactant>
    <interactant intactId="EBI-713786">
        <id>Q8IXK0</id>
        <label>PHC2</label>
    </interactant>
    <organismsDiffer>false</organismsDiffer>
    <experiments>3</experiments>
</comment>
<comment type="interaction">
    <interactant intactId="EBI-395290">
        <id>Q14498</id>
    </interactant>
    <interactant intactId="EBI-12029004">
        <id>P78424</id>
        <label>POU6F2</label>
    </interactant>
    <organismsDiffer>false</organismsDiffer>
    <experiments>3</experiments>
</comment>
<comment type="interaction">
    <interactant intactId="EBI-395290">
        <id>Q14498</id>
    </interactant>
    <interactant intactId="EBI-396072">
        <id>Q13427</id>
        <label>PPIG</label>
    </interactant>
    <organismsDiffer>false</organismsDiffer>
    <experiments>4</experiments>
</comment>
<comment type="interaction">
    <interactant intactId="EBI-395290">
        <id>Q14498</id>
    </interactant>
    <interactant intactId="EBI-5280197">
        <id>O75400-2</id>
        <label>PRPF40A</label>
    </interactant>
    <organismsDiffer>false</organismsDiffer>
    <experiments>6</experiments>
</comment>
<comment type="interaction">
    <interactant intactId="EBI-395290">
        <id>Q14498</id>
    </interactant>
    <interactant intactId="EBI-1044156">
        <id>O00422</id>
        <label>SAP18</label>
    </interactant>
    <organismsDiffer>false</organismsDiffer>
    <experiments>12</experiments>
</comment>
<comment type="interaction">
    <interactant intactId="EBI-395290">
        <id>Q14498</id>
    </interactant>
    <interactant intactId="EBI-727004">
        <id>O00560</id>
        <label>SDCBP</label>
    </interactant>
    <organismsDiffer>false</organismsDiffer>
    <experiments>3</experiments>
</comment>
<comment type="interaction">
    <interactant intactId="EBI-395290">
        <id>Q14498</id>
    </interactant>
    <interactant intactId="EBI-348469">
        <id>Q15427</id>
        <label>SF3B4</label>
    </interactant>
    <organismsDiffer>false</organismsDiffer>
    <experiments>4</experiments>
</comment>
<comment type="interaction">
    <interactant intactId="EBI-395290">
        <id>Q14498</id>
    </interactant>
    <interactant intactId="EBI-1044237">
        <id>Q8WXA9</id>
        <label>SREK1</label>
    </interactant>
    <organismsDiffer>false</organismsDiffer>
    <experiments>3</experiments>
</comment>
<comment type="interaction">
    <interactant intactId="EBI-395290">
        <id>Q14498</id>
    </interactant>
    <interactant intactId="EBI-10268630">
        <id>Q8N9Q2</id>
        <label>SREK1IP1</label>
    </interactant>
    <organismsDiffer>false</organismsDiffer>
    <experiments>3</experiments>
</comment>
<comment type="interaction">
    <interactant intactId="EBI-395290">
        <id>Q14498</id>
    </interactant>
    <interactant intactId="EBI-539478">
        <id>Q96SB4</id>
        <label>SRPK1</label>
    </interactant>
    <organismsDiffer>false</organismsDiffer>
    <experiments>4</experiments>
</comment>
<comment type="interaction">
    <interactant intactId="EBI-395290">
        <id>Q14498</id>
    </interactant>
    <interactant intactId="EBI-593303">
        <id>P78362</id>
        <label>SRPK2</label>
    </interactant>
    <organismsDiffer>false</organismsDiffer>
    <experiments>12</experiments>
</comment>
<comment type="interaction">
    <interactant intactId="EBI-395290">
        <id>Q14498</id>
    </interactant>
    <interactant intactId="EBI-3867173">
        <id>A7MD48</id>
        <label>SRRM4</label>
    </interactant>
    <organismsDiffer>false</organismsDiffer>
    <experiments>3</experiments>
</comment>
<comment type="interaction">
    <interactant intactId="EBI-395290">
        <id>Q14498</id>
    </interactant>
    <interactant intactId="EBI-1051785">
        <id>Q05519</id>
        <label>SRSF11</label>
    </interactant>
    <organismsDiffer>false</organismsDiffer>
    <experiments>3</experiments>
</comment>
<comment type="interaction">
    <interactant intactId="EBI-395290">
        <id>Q14498</id>
    </interactant>
    <interactant intactId="EBI-11975029">
        <id>Q05519-2</id>
        <label>SRSF11</label>
    </interactant>
    <organismsDiffer>false</organismsDiffer>
    <experiments>5</experiments>
</comment>
<comment type="interaction">
    <interactant intactId="EBI-395290">
        <id>Q14498</id>
    </interactant>
    <interactant intactId="EBI-741515">
        <id>Q9NVV9</id>
        <label>THAP1</label>
    </interactant>
    <organismsDiffer>false</organismsDiffer>
    <experiments>6</experiments>
</comment>
<comment type="interaction">
    <interactant intactId="EBI-395290">
        <id>Q14498</id>
    </interactant>
    <interactant intactId="EBI-597063">
        <id>Q8TBK6</id>
        <label>ZCCHC10</label>
    </interactant>
    <organismsDiffer>false</organismsDiffer>
    <experiments>4</experiments>
</comment>
<comment type="interaction">
    <interactant intactId="EBI-11032687">
        <id>Q14498-2</id>
    </interactant>
    <interactant intactId="EBI-946095">
        <id>Q15365</id>
        <label>PCBP1</label>
    </interactant>
    <organismsDiffer>false</organismsDiffer>
    <experiments>2</experiments>
</comment>
<comment type="interaction">
    <interactant intactId="EBI-6654703">
        <id>Q14498-3</id>
    </interactant>
    <interactant intactId="EBI-8466265">
        <id>Q96MA6</id>
        <label>AK8</label>
    </interactant>
    <organismsDiffer>false</organismsDiffer>
    <experiments>3</experiments>
</comment>
<comment type="interaction">
    <interactant intactId="EBI-6654703">
        <id>Q14498-3</id>
    </interactant>
    <interactant intactId="EBI-744695">
        <id>Q8N9N5</id>
        <label>BANP</label>
    </interactant>
    <organismsDiffer>false</organismsDiffer>
    <experiments>3</experiments>
</comment>
<comment type="interaction">
    <interactant intactId="EBI-6654703">
        <id>Q14498-3</id>
    </interactant>
    <interactant intactId="EBI-2799179">
        <id>Q8TCP9</id>
        <label>FAM200A</label>
    </interactant>
    <organismsDiffer>false</organismsDiffer>
    <experiments>3</experiments>
</comment>
<comment type="interaction">
    <interactant intactId="EBI-6654703">
        <id>Q14498-3</id>
    </interactant>
    <interactant intactId="EBI-618309">
        <id>Q08379</id>
        <label>GOLGA2</label>
    </interactant>
    <organismsDiffer>false</organismsDiffer>
    <experiments>3</experiments>
</comment>
<comment type="interaction">
    <interactant intactId="EBI-6654703">
        <id>Q14498-3</id>
    </interactant>
    <interactant intactId="EBI-10172004">
        <id>Q8IX15-3</id>
        <label>HOMEZ</label>
    </interactant>
    <organismsDiffer>false</organismsDiffer>
    <experiments>3</experiments>
</comment>
<comment type="interaction">
    <interactant intactId="EBI-6654703">
        <id>Q14498-3</id>
    </interactant>
    <interactant intactId="EBI-751942">
        <id>Q7Z7F0</id>
        <label>KHDC4</label>
    </interactant>
    <organismsDiffer>false</organismsDiffer>
    <experiments>3</experiments>
</comment>
<comment type="interaction">
    <interactant intactId="EBI-6654703">
        <id>Q14498-3</id>
    </interactant>
    <interactant intactId="EBI-9089060">
        <id>Q7Z7F0-4</id>
        <label>KHDC4</label>
    </interactant>
    <organismsDiffer>false</organismsDiffer>
    <experiments>3</experiments>
</comment>
<comment type="interaction">
    <interactant intactId="EBI-6654703">
        <id>Q14498-3</id>
    </interactant>
    <interactant intactId="EBI-741109">
        <id>Q9UH92</id>
        <label>MLX</label>
    </interactant>
    <organismsDiffer>false</organismsDiffer>
    <experiments>3</experiments>
</comment>
<comment type="interaction">
    <interactant intactId="EBI-6654703">
        <id>Q14498-3</id>
    </interactant>
    <interactant intactId="EBI-713786">
        <id>Q8IXK0</id>
        <label>PHC2</label>
    </interactant>
    <organismsDiffer>false</organismsDiffer>
    <experiments>3</experiments>
</comment>
<comment type="interaction">
    <interactant intactId="EBI-6654703">
        <id>Q14498-3</id>
    </interactant>
    <interactant intactId="EBI-307352">
        <id>Q04864</id>
        <label>REL</label>
    </interactant>
    <organismsDiffer>false</organismsDiffer>
    <experiments>3</experiments>
</comment>
<comment type="interaction">
    <interactant intactId="EBI-6654703">
        <id>Q14498-3</id>
    </interactant>
    <interactant intactId="EBI-1044156">
        <id>O00422</id>
        <label>SAP18</label>
    </interactant>
    <organismsDiffer>false</organismsDiffer>
    <experiments>3</experiments>
</comment>
<comment type="interaction">
    <interactant intactId="EBI-6654703">
        <id>Q14498-3</id>
    </interactant>
    <interactant intactId="EBI-751145">
        <id>P23497</id>
        <label>SP100</label>
    </interactant>
    <organismsDiffer>false</organismsDiffer>
    <experiments>3</experiments>
</comment>
<comment type="interaction">
    <interactant intactId="EBI-6654703">
        <id>Q14498-3</id>
    </interactant>
    <interactant intactId="EBI-1051785">
        <id>Q05519</id>
        <label>SRSF11</label>
    </interactant>
    <organismsDiffer>false</organismsDiffer>
    <experiments>3</experiments>
</comment>
<comment type="interaction">
    <interactant intactId="EBI-6654703">
        <id>Q14498-3</id>
    </interactant>
    <interactant intactId="EBI-723574">
        <id>O15209</id>
        <label>ZBTB22</label>
    </interactant>
    <organismsDiffer>false</organismsDiffer>
    <experiments>3</experiments>
</comment>
<comment type="interaction">
    <interactant intactId="EBI-6654703">
        <id>Q14498-3</id>
    </interactant>
    <interactant intactId="EBI-597063">
        <id>Q8TBK6</id>
        <label>ZCCHC10</label>
    </interactant>
    <organismsDiffer>false</organismsDiffer>
    <experiments>3</experiments>
</comment>
<comment type="subcellular location">
    <subcellularLocation>
        <location evidence="13">Nucleus speckle</location>
    </subcellularLocation>
    <text evidence="13">Concentrated in nuclear speckles (PubMed:8227358). Colocalizes with the core spliceosomal snRNP proteins (PubMed:8227358).</text>
</comment>
<comment type="alternative products">
    <event type="alternative splicing"/>
    <isoform>
        <id>Q14498-1</id>
        <name>1</name>
        <name>HCC1.4</name>
        <sequence type="displayed"/>
    </isoform>
    <isoform>
        <id>Q14498-2</id>
        <name>2</name>
        <name>HCC1.3</name>
        <sequence type="described" ref="VSP_005820"/>
    </isoform>
    <isoform>
        <id>Q14498-3</id>
        <name>3</name>
        <sequence type="described" ref="VSP_043375"/>
    </isoform>
</comment>
<comment type="tissue specificity">
    <text evidence="13">Widely expressed. Highly expressed in pancreas, skeletal muscle, lung and brain (PubMed:8227358). Expressed at intermediate level in kidney, liver and heart (PubMed:8227358).</text>
</comment>
<comment type="PTM">
    <text evidence="7 8 10 11 12">Aryl sulfonamide anticancer drugs, such as indisulam (E7070) or E7820, promote ubiquitination and subsequent degradation by the DCX(DCAF15) complex (PubMed:28302793, PubMed:28437394, PubMed:31693891). RBM39 degradation results in splicing defects and death in cancer cell lines (PubMed:28302793, PubMed:28437394, PubMed:31693891). Aryl sulfonamide anticancer drugs change the substrate specificity of DCAF15 by acting as a molecular glue that promotes binding between DCAF15 and weak affinity interactor RBM39 (PubMed:31686031, PubMed:31819272).</text>
</comment>
<comment type="miscellaneous">
    <text evidence="13">Antibodies against RBM39 are present in sera from a patient with hepatocellular carcinoma who developed several autoantibodies.</text>
</comment>
<comment type="similarity">
    <text evidence="21">Belongs to the splicing factor SR family.</text>
</comment>
<accession>Q14498</accession>
<accession>A2RRD3</accession>
<accession>A5D8W2</accession>
<accession>B0BLV3</accession>
<accession>E1P5S0</accession>
<accession>E1P5S1</accession>
<accession>Q14499</accession>
<name>RBM39_HUMAN</name>
<evidence type="ECO:0000250" key="1">
    <source>
        <dbReference type="UniProtKB" id="Q8VH51"/>
    </source>
</evidence>
<evidence type="ECO:0000255" key="2">
    <source>
        <dbReference type="PROSITE-ProRule" id="PRU00176"/>
    </source>
</evidence>
<evidence type="ECO:0000256" key="3">
    <source>
        <dbReference type="SAM" id="MobiDB-lite"/>
    </source>
</evidence>
<evidence type="ECO:0000269" key="4">
    <source>
    </source>
</evidence>
<evidence type="ECO:0000269" key="5">
    <source>
    </source>
</evidence>
<evidence type="ECO:0000269" key="6">
    <source>
    </source>
</evidence>
<evidence type="ECO:0000269" key="7">
    <source>
    </source>
</evidence>
<evidence type="ECO:0000269" key="8">
    <source>
    </source>
</evidence>
<evidence type="ECO:0000269" key="9">
    <source>
    </source>
</evidence>
<evidence type="ECO:0000269" key="10">
    <source>
    </source>
</evidence>
<evidence type="ECO:0000269" key="11">
    <source>
    </source>
</evidence>
<evidence type="ECO:0000269" key="12">
    <source>
    </source>
</evidence>
<evidence type="ECO:0000269" key="13">
    <source>
    </source>
</evidence>
<evidence type="ECO:0000269" key="14">
    <source ref="6"/>
</evidence>
<evidence type="ECO:0000303" key="15">
    <source>
    </source>
</evidence>
<evidence type="ECO:0000303" key="16">
    <source>
    </source>
</evidence>
<evidence type="ECO:0000303" key="17">
    <source>
    </source>
</evidence>
<evidence type="ECO:0000303" key="18">
    <source>
    </source>
</evidence>
<evidence type="ECO:0000303" key="19">
    <source>
    </source>
</evidence>
<evidence type="ECO:0000303" key="20">
    <source>
    </source>
</evidence>
<evidence type="ECO:0000305" key="21"/>
<evidence type="ECO:0000312" key="22">
    <source>
        <dbReference type="HGNC" id="HGNC:15923"/>
    </source>
</evidence>
<evidence type="ECO:0007744" key="23">
    <source>
        <dbReference type="PDB" id="6PAI"/>
    </source>
</evidence>
<evidence type="ECO:0007744" key="24">
    <source>
        <dbReference type="PDB" id="6Q0R"/>
    </source>
</evidence>
<evidence type="ECO:0007744" key="25">
    <source>
        <dbReference type="PDB" id="6Q0V"/>
    </source>
</evidence>
<evidence type="ECO:0007744" key="26">
    <source>
        <dbReference type="PDB" id="6Q0W"/>
    </source>
</evidence>
<evidence type="ECO:0007744" key="27">
    <source>
        <dbReference type="PDB" id="6SJ7"/>
    </source>
</evidence>
<evidence type="ECO:0007744" key="28">
    <source>
        <dbReference type="PDB" id="6UD7"/>
    </source>
</evidence>
<evidence type="ECO:0007744" key="29">
    <source>
        <dbReference type="PDB" id="6UE5"/>
    </source>
</evidence>
<evidence type="ECO:0007744" key="30">
    <source>
    </source>
</evidence>
<evidence type="ECO:0007744" key="31">
    <source>
    </source>
</evidence>
<evidence type="ECO:0007744" key="32">
    <source>
    </source>
</evidence>
<evidence type="ECO:0007744" key="33">
    <source>
    </source>
</evidence>
<evidence type="ECO:0007744" key="34">
    <source>
    </source>
</evidence>
<evidence type="ECO:0007744" key="35">
    <source>
    </source>
</evidence>
<evidence type="ECO:0007744" key="36">
    <source>
    </source>
</evidence>
<evidence type="ECO:0007744" key="37">
    <source>
    </source>
</evidence>
<evidence type="ECO:0007744" key="38">
    <source>
    </source>
</evidence>
<evidence type="ECO:0007744" key="39">
    <source>
    </source>
</evidence>
<evidence type="ECO:0007744" key="40">
    <source>
    </source>
</evidence>
<evidence type="ECO:0007829" key="41">
    <source>
        <dbReference type="PDB" id="2JRS"/>
    </source>
</evidence>
<evidence type="ECO:0007829" key="42">
    <source>
        <dbReference type="PDB" id="2MHN"/>
    </source>
</evidence>
<evidence type="ECO:0007829" key="43">
    <source>
        <dbReference type="PDB" id="4OZ1"/>
    </source>
</evidence>
<evidence type="ECO:0007829" key="44">
    <source>
        <dbReference type="PDB" id="4YUD"/>
    </source>
</evidence>
<evidence type="ECO:0007829" key="45">
    <source>
        <dbReference type="PDB" id="6PAI"/>
    </source>
</evidence>
<evidence type="ECO:0007829" key="46">
    <source>
        <dbReference type="PDB" id="6UD7"/>
    </source>
</evidence>
<evidence type="ECO:0007829" key="47">
    <source>
        <dbReference type="PDB" id="7Q33"/>
    </source>
</evidence>
<proteinExistence type="evidence at protein level"/>
<organism>
    <name type="scientific">Homo sapiens</name>
    <name type="common">Human</name>
    <dbReference type="NCBI Taxonomy" id="9606"/>
    <lineage>
        <taxon>Eukaryota</taxon>
        <taxon>Metazoa</taxon>
        <taxon>Chordata</taxon>
        <taxon>Craniata</taxon>
        <taxon>Vertebrata</taxon>
        <taxon>Euteleostomi</taxon>
        <taxon>Mammalia</taxon>
        <taxon>Eutheria</taxon>
        <taxon>Euarchontoglires</taxon>
        <taxon>Primates</taxon>
        <taxon>Haplorrhini</taxon>
        <taxon>Catarrhini</taxon>
        <taxon>Hominidae</taxon>
        <taxon>Homo</taxon>
    </lineage>
</organism>
<dbReference type="EMBL" id="L10910">
    <property type="protein sequence ID" value="AAA16346.1"/>
    <property type="molecule type" value="mRNA"/>
</dbReference>
<dbReference type="EMBL" id="L10911">
    <property type="protein sequence ID" value="AAA16347.1"/>
    <property type="molecule type" value="mRNA"/>
</dbReference>
<dbReference type="EMBL" id="AK299678">
    <property type="protein sequence ID" value="BAG61586.1"/>
    <property type="molecule type" value="mRNA"/>
</dbReference>
<dbReference type="EMBL" id="AL357374">
    <property type="status" value="NOT_ANNOTATED_CDS"/>
    <property type="molecule type" value="Genomic_DNA"/>
</dbReference>
<dbReference type="EMBL" id="CH471077">
    <property type="protein sequence ID" value="EAW76159.1"/>
    <property type="molecule type" value="Genomic_DNA"/>
</dbReference>
<dbReference type="EMBL" id="CH471077">
    <property type="protein sequence ID" value="EAW76161.1"/>
    <property type="molecule type" value="Genomic_DNA"/>
</dbReference>
<dbReference type="EMBL" id="CH471077">
    <property type="protein sequence ID" value="EAW76162.1"/>
    <property type="molecule type" value="Genomic_DNA"/>
</dbReference>
<dbReference type="EMBL" id="CH471077">
    <property type="protein sequence ID" value="EAW76163.1"/>
    <property type="molecule type" value="Genomic_DNA"/>
</dbReference>
<dbReference type="EMBL" id="BC131543">
    <property type="protein sequence ID" value="AAI31544.1"/>
    <property type="molecule type" value="mRNA"/>
</dbReference>
<dbReference type="EMBL" id="BC141835">
    <property type="protein sequence ID" value="AAI41836.1"/>
    <property type="molecule type" value="mRNA"/>
</dbReference>
<dbReference type="EMBL" id="BC158172">
    <property type="protein sequence ID" value="AAI58173.1"/>
    <property type="molecule type" value="mRNA"/>
</dbReference>
<dbReference type="CCDS" id="CCDS13265.1">
    <molecule id="Q14498-2"/>
</dbReference>
<dbReference type="CCDS" id="CCDS13266.1">
    <molecule id="Q14498-1"/>
</dbReference>
<dbReference type="CCDS" id="CCDS56186.1">
    <molecule id="Q14498-3"/>
</dbReference>
<dbReference type="PIR" id="I55595">
    <property type="entry name" value="I55595"/>
</dbReference>
<dbReference type="RefSeq" id="NP_001229528.1">
    <molecule id="Q14498-3"/>
    <property type="nucleotide sequence ID" value="NM_001242599.2"/>
</dbReference>
<dbReference type="RefSeq" id="NP_001229529.1">
    <property type="nucleotide sequence ID" value="NM_001242600.1"/>
</dbReference>
<dbReference type="RefSeq" id="NP_004893.1">
    <molecule id="Q14498-2"/>
    <property type="nucleotide sequence ID" value="NM_004902.4"/>
</dbReference>
<dbReference type="RefSeq" id="NP_909122.1">
    <molecule id="Q14498-1"/>
    <property type="nucleotide sequence ID" value="NM_184234.3"/>
</dbReference>
<dbReference type="PDB" id="2JRS">
    <property type="method" value="NMR"/>
    <property type="chains" value="A=235-331"/>
</dbReference>
<dbReference type="PDB" id="2MHN">
    <property type="method" value="NMR"/>
    <property type="chains" value="A=144-234"/>
</dbReference>
<dbReference type="PDB" id="4OO6">
    <property type="method" value="X-ray"/>
    <property type="resolution" value="2.70 A"/>
    <property type="chains" value="B=73-99"/>
</dbReference>
<dbReference type="PDB" id="4OZ0">
    <property type="method" value="X-ray"/>
    <property type="resolution" value="2.20 A"/>
    <property type="chains" value="A/B=417-530"/>
</dbReference>
<dbReference type="PDB" id="4OZ1">
    <property type="method" value="X-ray"/>
    <property type="resolution" value="1.74 A"/>
    <property type="chains" value="A/B=417-530"/>
</dbReference>
<dbReference type="PDB" id="4YUD">
    <property type="method" value="X-ray"/>
    <property type="resolution" value="1.28 A"/>
    <property type="chains" value="A=144-234"/>
</dbReference>
<dbReference type="PDB" id="6PAI">
    <property type="method" value="X-ray"/>
    <property type="resolution" value="2.90 A"/>
    <property type="chains" value="D=235-331"/>
</dbReference>
<dbReference type="PDB" id="6Q0R">
    <property type="method" value="X-ray"/>
    <property type="resolution" value="2.90 A"/>
    <property type="chains" value="D=250-332"/>
</dbReference>
<dbReference type="PDB" id="6Q0V">
    <property type="method" value="X-ray"/>
    <property type="resolution" value="2.90 A"/>
    <property type="chains" value="D=250-332"/>
</dbReference>
<dbReference type="PDB" id="6Q0W">
    <property type="method" value="X-ray"/>
    <property type="resolution" value="2.90 A"/>
    <property type="chains" value="D=250-332"/>
</dbReference>
<dbReference type="PDB" id="6SJ7">
    <property type="method" value="EM"/>
    <property type="resolution" value="3.54 A"/>
    <property type="chains" value="C=91-171"/>
</dbReference>
<dbReference type="PDB" id="6UD7">
    <property type="method" value="X-ray"/>
    <property type="resolution" value="2.30 A"/>
    <property type="chains" value="C=91-171"/>
</dbReference>
<dbReference type="PDB" id="6UE5">
    <property type="method" value="X-ray"/>
    <property type="resolution" value="2.61 A"/>
    <property type="chains" value="C=91-171"/>
</dbReference>
<dbReference type="PDB" id="7Q33">
    <property type="method" value="NMR"/>
    <property type="chains" value="A=247-332"/>
</dbReference>
<dbReference type="PDBsum" id="2JRS"/>
<dbReference type="PDBsum" id="2MHN"/>
<dbReference type="PDBsum" id="4OO6"/>
<dbReference type="PDBsum" id="4OZ0"/>
<dbReference type="PDBsum" id="4OZ1"/>
<dbReference type="PDBsum" id="4YUD"/>
<dbReference type="PDBsum" id="6PAI"/>
<dbReference type="PDBsum" id="6Q0R"/>
<dbReference type="PDBsum" id="6Q0V"/>
<dbReference type="PDBsum" id="6Q0W"/>
<dbReference type="PDBsum" id="6SJ7"/>
<dbReference type="PDBsum" id="6UD7"/>
<dbReference type="PDBsum" id="6UE5"/>
<dbReference type="PDBsum" id="7Q33"/>
<dbReference type="BMRB" id="Q14498"/>
<dbReference type="EMDB" id="EMD-20553"/>
<dbReference type="EMDB" id="EMD-20554"/>
<dbReference type="SMR" id="Q14498"/>
<dbReference type="BioGRID" id="114952">
    <property type="interactions" value="1056"/>
</dbReference>
<dbReference type="CORUM" id="Q14498"/>
<dbReference type="DIP" id="DIP-32928N"/>
<dbReference type="FunCoup" id="Q14498">
    <property type="interactions" value="3344"/>
</dbReference>
<dbReference type="IntAct" id="Q14498">
    <property type="interactions" value="359"/>
</dbReference>
<dbReference type="MINT" id="Q14498"/>
<dbReference type="STRING" id="9606.ENSP00000253363"/>
<dbReference type="BindingDB" id="Q14498"/>
<dbReference type="ChEMBL" id="CHEMBL4680031"/>
<dbReference type="GlyGen" id="Q14498">
    <property type="glycosylation" value="1 site, 1 O-linked glycan (1 site)"/>
</dbReference>
<dbReference type="iPTMnet" id="Q14498"/>
<dbReference type="MetOSite" id="Q14498"/>
<dbReference type="PhosphoSitePlus" id="Q14498"/>
<dbReference type="SwissPalm" id="Q14498"/>
<dbReference type="BioMuta" id="RBM39"/>
<dbReference type="DMDM" id="28201880"/>
<dbReference type="jPOST" id="Q14498"/>
<dbReference type="MassIVE" id="Q14498"/>
<dbReference type="PaxDb" id="9606-ENSP00000253363"/>
<dbReference type="PeptideAtlas" id="Q14498"/>
<dbReference type="ProteomicsDB" id="60005">
    <molecule id="Q14498-1"/>
</dbReference>
<dbReference type="ProteomicsDB" id="60006">
    <molecule id="Q14498-2"/>
</dbReference>
<dbReference type="ProteomicsDB" id="60007">
    <molecule id="Q14498-3"/>
</dbReference>
<dbReference type="Pumba" id="Q14498"/>
<dbReference type="Antibodypedia" id="459">
    <property type="antibodies" value="241 antibodies from 28 providers"/>
</dbReference>
<dbReference type="DNASU" id="9584"/>
<dbReference type="Ensembl" id="ENST00000253363.11">
    <molecule id="Q14498-1"/>
    <property type="protein sequence ID" value="ENSP00000253363.6"/>
    <property type="gene ID" value="ENSG00000131051.24"/>
</dbReference>
<dbReference type="Ensembl" id="ENST00000361162.10">
    <molecule id="Q14498-2"/>
    <property type="protein sequence ID" value="ENSP00000354437.6"/>
    <property type="gene ID" value="ENSG00000131051.24"/>
</dbReference>
<dbReference type="Ensembl" id="ENST00000528062.7">
    <molecule id="Q14498-3"/>
    <property type="protein sequence ID" value="ENSP00000436747.2"/>
    <property type="gene ID" value="ENSG00000131051.24"/>
</dbReference>
<dbReference type="GeneID" id="9584"/>
<dbReference type="KEGG" id="hsa:9584"/>
<dbReference type="MANE-Select" id="ENST00000253363.11">
    <property type="protein sequence ID" value="ENSP00000253363.6"/>
    <property type="RefSeq nucleotide sequence ID" value="NM_184234.3"/>
    <property type="RefSeq protein sequence ID" value="NP_909122.1"/>
</dbReference>
<dbReference type="UCSC" id="uc002xeb.4">
    <molecule id="Q14498-1"/>
    <property type="organism name" value="human"/>
</dbReference>
<dbReference type="AGR" id="HGNC:15923"/>
<dbReference type="CTD" id="9584"/>
<dbReference type="DisGeNET" id="9584"/>
<dbReference type="GeneCards" id="RBM39"/>
<dbReference type="HGNC" id="HGNC:15923">
    <property type="gene designation" value="RBM39"/>
</dbReference>
<dbReference type="HPA" id="ENSG00000131051">
    <property type="expression patterns" value="Low tissue specificity"/>
</dbReference>
<dbReference type="MIM" id="604739">
    <property type="type" value="gene"/>
</dbReference>
<dbReference type="neXtProt" id="NX_Q14498"/>
<dbReference type="OpenTargets" id="ENSG00000131051"/>
<dbReference type="PharmGKB" id="PA34450"/>
<dbReference type="VEuPathDB" id="HostDB:ENSG00000131051"/>
<dbReference type="eggNOG" id="KOG0147">
    <property type="taxonomic scope" value="Eukaryota"/>
</dbReference>
<dbReference type="GeneTree" id="ENSGT00940000154468"/>
<dbReference type="InParanoid" id="Q14498"/>
<dbReference type="OMA" id="GRDNDKG"/>
<dbReference type="OrthoDB" id="8123449at2759"/>
<dbReference type="PAN-GO" id="Q14498">
    <property type="GO annotations" value="0 GO annotations based on evolutionary models"/>
</dbReference>
<dbReference type="PhylomeDB" id="Q14498"/>
<dbReference type="TreeFam" id="TF320448"/>
<dbReference type="PathwayCommons" id="Q14498"/>
<dbReference type="Reactome" id="R-HSA-72163">
    <property type="pathway name" value="mRNA Splicing - Major Pathway"/>
</dbReference>
<dbReference type="SignaLink" id="Q14498"/>
<dbReference type="SIGNOR" id="Q14498"/>
<dbReference type="BioGRID-ORCS" id="9584">
    <property type="hits" value="750 hits in 1172 CRISPR screens"/>
</dbReference>
<dbReference type="CD-CODE" id="91857CE7">
    <property type="entry name" value="Nucleolus"/>
</dbReference>
<dbReference type="ChiTaRS" id="RBM39">
    <property type="organism name" value="human"/>
</dbReference>
<dbReference type="EvolutionaryTrace" id="Q14498"/>
<dbReference type="GeneWiki" id="RBM39"/>
<dbReference type="GenomeRNAi" id="9584"/>
<dbReference type="Pharos" id="Q14498">
    <property type="development level" value="Tbio"/>
</dbReference>
<dbReference type="PRO" id="PR:Q14498"/>
<dbReference type="Proteomes" id="UP000005640">
    <property type="component" value="Chromosome 20"/>
</dbReference>
<dbReference type="RNAct" id="Q14498">
    <property type="molecule type" value="protein"/>
</dbReference>
<dbReference type="Bgee" id="ENSG00000131051">
    <property type="expression patterns" value="Expressed in right uterine tube and 174 other cell types or tissues"/>
</dbReference>
<dbReference type="ExpressionAtlas" id="Q14498">
    <property type="expression patterns" value="baseline and differential"/>
</dbReference>
<dbReference type="GO" id="GO:0034451">
    <property type="term" value="C:centriolar satellite"/>
    <property type="evidence" value="ECO:0000314"/>
    <property type="project" value="HPA"/>
</dbReference>
<dbReference type="GO" id="GO:0015630">
    <property type="term" value="C:microtubule cytoskeleton"/>
    <property type="evidence" value="ECO:0000314"/>
    <property type="project" value="HPA"/>
</dbReference>
<dbReference type="GO" id="GO:0016607">
    <property type="term" value="C:nuclear speck"/>
    <property type="evidence" value="ECO:0000314"/>
    <property type="project" value="HPA"/>
</dbReference>
<dbReference type="GO" id="GO:0005654">
    <property type="term" value="C:nucleoplasm"/>
    <property type="evidence" value="ECO:0000314"/>
    <property type="project" value="HPA"/>
</dbReference>
<dbReference type="GO" id="GO:0032991">
    <property type="term" value="C:protein-containing complex"/>
    <property type="evidence" value="ECO:0000315"/>
    <property type="project" value="UniProtKB"/>
</dbReference>
<dbReference type="GO" id="GO:0003723">
    <property type="term" value="F:RNA binding"/>
    <property type="evidence" value="ECO:0007005"/>
    <property type="project" value="UniProtKB"/>
</dbReference>
<dbReference type="GO" id="GO:0050733">
    <property type="term" value="F:RS domain binding"/>
    <property type="evidence" value="ECO:0007669"/>
    <property type="project" value="Ensembl"/>
</dbReference>
<dbReference type="GO" id="GO:1990446">
    <property type="term" value="F:U1 snRNP binding"/>
    <property type="evidence" value="ECO:0000318"/>
    <property type="project" value="GO_Central"/>
</dbReference>
<dbReference type="GO" id="GO:0006397">
    <property type="term" value="P:mRNA processing"/>
    <property type="evidence" value="ECO:0007669"/>
    <property type="project" value="UniProtKB-KW"/>
</dbReference>
<dbReference type="GO" id="GO:0048024">
    <property type="term" value="P:regulation of mRNA splicing, via spliceosome"/>
    <property type="evidence" value="ECO:0000314"/>
    <property type="project" value="UniProtKB"/>
</dbReference>
<dbReference type="GO" id="GO:0006396">
    <property type="term" value="P:RNA processing"/>
    <property type="evidence" value="ECO:0000304"/>
    <property type="project" value="ProtInc"/>
</dbReference>
<dbReference type="GO" id="GO:0008380">
    <property type="term" value="P:RNA splicing"/>
    <property type="evidence" value="ECO:0007669"/>
    <property type="project" value="UniProtKB-KW"/>
</dbReference>
<dbReference type="CDD" id="cd12537">
    <property type="entry name" value="RRM1_RBM23"/>
    <property type="match status" value="1"/>
</dbReference>
<dbReference type="CDD" id="cd12284">
    <property type="entry name" value="RRM2_RBM23_RBM39"/>
    <property type="match status" value="1"/>
</dbReference>
<dbReference type="CDD" id="cd12285">
    <property type="entry name" value="RRM3_RBM39_like"/>
    <property type="match status" value="1"/>
</dbReference>
<dbReference type="FunFam" id="3.30.70.330:FF:000080">
    <property type="entry name" value="RNA-binding protein 39 isoform X1"/>
    <property type="match status" value="1"/>
</dbReference>
<dbReference type="FunFam" id="3.30.70.330:FF:000090">
    <property type="entry name" value="RNA-binding protein 39 isoform X1"/>
    <property type="match status" value="1"/>
</dbReference>
<dbReference type="FunFam" id="3.30.70.330:FF:000373">
    <property type="entry name" value="RNA-binding protein 39 isoform X4"/>
    <property type="match status" value="1"/>
</dbReference>
<dbReference type="Gene3D" id="3.30.70.330">
    <property type="match status" value="3"/>
</dbReference>
<dbReference type="IDEAL" id="IID00567"/>
<dbReference type="InterPro" id="IPR012677">
    <property type="entry name" value="Nucleotide-bd_a/b_plait_sf"/>
</dbReference>
<dbReference type="InterPro" id="IPR035979">
    <property type="entry name" value="RBD_domain_sf"/>
</dbReference>
<dbReference type="InterPro" id="IPR029123">
    <property type="entry name" value="RBM39_linker"/>
</dbReference>
<dbReference type="InterPro" id="IPR006509">
    <property type="entry name" value="RBM39_SF"/>
</dbReference>
<dbReference type="InterPro" id="IPR000504">
    <property type="entry name" value="RRM_dom"/>
</dbReference>
<dbReference type="InterPro" id="IPR003954">
    <property type="entry name" value="RRM_dom_euk"/>
</dbReference>
<dbReference type="NCBIfam" id="TIGR01622">
    <property type="entry name" value="SF-CC1"/>
    <property type="match status" value="1"/>
</dbReference>
<dbReference type="PANTHER" id="PTHR48036">
    <property type="entry name" value="SPLICING FACTOR (PAD-1), PUTATIVE (AFU_ORTHOLOGUE AFUA_1G15810)-RELATED"/>
    <property type="match status" value="1"/>
</dbReference>
<dbReference type="Pfam" id="PF15519">
    <property type="entry name" value="RBM39linker"/>
    <property type="match status" value="1"/>
</dbReference>
<dbReference type="Pfam" id="PF00076">
    <property type="entry name" value="RRM_1"/>
    <property type="match status" value="2"/>
</dbReference>
<dbReference type="SMART" id="SM00360">
    <property type="entry name" value="RRM"/>
    <property type="match status" value="3"/>
</dbReference>
<dbReference type="SMART" id="SM00361">
    <property type="entry name" value="RRM_1"/>
    <property type="match status" value="2"/>
</dbReference>
<dbReference type="SUPFAM" id="SSF54928">
    <property type="entry name" value="RNA-binding domain, RBD"/>
    <property type="match status" value="2"/>
</dbReference>
<dbReference type="PROSITE" id="PS50102">
    <property type="entry name" value="RRM"/>
    <property type="match status" value="2"/>
</dbReference>
<sequence>MADDIDIEAMLEAPYKKDENKLSSANGHEERSKKRKKSKSRSRSHERKRSKSKERKRSRDRERKKSKSRERKRSRSKERRRSRSRSRDRRFRGRYRSPYSGPKFNSAIRGKIGLPHSIKLSRRRSRSKSPFRKDKSPVREPIDNLTPEERDARTVFCMQLAARIRPRDLEEFFSTVGKVRDVRMISDRNSRRSKGIAYVEFVDVSSVPLAIGLTGQRVLGVPIIVQASQAEKNRAAAMANNLQKGSAGPMRLYVGSLHFNITEDMLRGIFEPFGRIESIQLMMDSETGRSKGYGFITFSDSECAKKALEQLNGFELAGRPMKVGHVTERTDASSASSFLDSDELERTGIDLGTTGRLQLMARLAEGTGLQIPPAAQQALQMSGSLAFGAVAEFSFVIDLQTRLSQQTEASALAAAASVQPLATQCFQLSNMFNPQTEEEVGWDTEIKDDVIEECNKHGGVIHIYVDKNSAQGNVYVKCPSIAAAIAAVNALHGRWFAGKMITAAYVPLPTYHNLFPDSMTATQLLVPSRR</sequence>